<keyword id="KW-0227">DNA damage</keyword>
<keyword id="KW-0234">DNA repair</keyword>
<keyword id="KW-1185">Reference proteome</keyword>
<protein>
    <recommendedName>
        <fullName evidence="1">DNA mismatch repair protein MutL</fullName>
    </recommendedName>
</protein>
<dbReference type="EMBL" id="CP000492">
    <property type="protein sequence ID" value="ABL64239.1"/>
    <property type="molecule type" value="Genomic_DNA"/>
</dbReference>
<dbReference type="RefSeq" id="WP_011744079.1">
    <property type="nucleotide sequence ID" value="NC_008639.1"/>
</dbReference>
<dbReference type="SMR" id="A1BCW2"/>
<dbReference type="STRING" id="290317.Cpha266_0172"/>
<dbReference type="KEGG" id="cph:Cpha266_0172"/>
<dbReference type="eggNOG" id="COG0323">
    <property type="taxonomic scope" value="Bacteria"/>
</dbReference>
<dbReference type="HOGENOM" id="CLU_004131_4_2_10"/>
<dbReference type="OrthoDB" id="9763467at2"/>
<dbReference type="Proteomes" id="UP000008701">
    <property type="component" value="Chromosome"/>
</dbReference>
<dbReference type="GO" id="GO:0032300">
    <property type="term" value="C:mismatch repair complex"/>
    <property type="evidence" value="ECO:0007669"/>
    <property type="project" value="InterPro"/>
</dbReference>
<dbReference type="GO" id="GO:0005524">
    <property type="term" value="F:ATP binding"/>
    <property type="evidence" value="ECO:0007669"/>
    <property type="project" value="InterPro"/>
</dbReference>
<dbReference type="GO" id="GO:0016887">
    <property type="term" value="F:ATP hydrolysis activity"/>
    <property type="evidence" value="ECO:0007669"/>
    <property type="project" value="InterPro"/>
</dbReference>
<dbReference type="GO" id="GO:0140664">
    <property type="term" value="F:ATP-dependent DNA damage sensor activity"/>
    <property type="evidence" value="ECO:0007669"/>
    <property type="project" value="InterPro"/>
</dbReference>
<dbReference type="GO" id="GO:0030983">
    <property type="term" value="F:mismatched DNA binding"/>
    <property type="evidence" value="ECO:0007669"/>
    <property type="project" value="InterPro"/>
</dbReference>
<dbReference type="GO" id="GO:0006298">
    <property type="term" value="P:mismatch repair"/>
    <property type="evidence" value="ECO:0007669"/>
    <property type="project" value="UniProtKB-UniRule"/>
</dbReference>
<dbReference type="CDD" id="cd16926">
    <property type="entry name" value="HATPase_MutL-MLH-PMS-like"/>
    <property type="match status" value="1"/>
</dbReference>
<dbReference type="CDD" id="cd00782">
    <property type="entry name" value="MutL_Trans"/>
    <property type="match status" value="1"/>
</dbReference>
<dbReference type="FunFam" id="3.30.565.10:FF:000003">
    <property type="entry name" value="DNA mismatch repair endonuclease MutL"/>
    <property type="match status" value="1"/>
</dbReference>
<dbReference type="Gene3D" id="3.30.230.10">
    <property type="match status" value="1"/>
</dbReference>
<dbReference type="Gene3D" id="3.30.565.10">
    <property type="entry name" value="Histidine kinase-like ATPase, C-terminal domain"/>
    <property type="match status" value="1"/>
</dbReference>
<dbReference type="Gene3D" id="3.30.1540.20">
    <property type="entry name" value="MutL, C-terminal domain, dimerisation subdomain"/>
    <property type="match status" value="1"/>
</dbReference>
<dbReference type="Gene3D" id="3.30.1370.100">
    <property type="entry name" value="MutL, C-terminal domain, regulatory subdomain"/>
    <property type="match status" value="1"/>
</dbReference>
<dbReference type="HAMAP" id="MF_00149">
    <property type="entry name" value="DNA_mis_repair"/>
    <property type="match status" value="1"/>
</dbReference>
<dbReference type="InterPro" id="IPR014762">
    <property type="entry name" value="DNA_mismatch_repair_CS"/>
</dbReference>
<dbReference type="InterPro" id="IPR020667">
    <property type="entry name" value="DNA_mismatch_repair_MutL"/>
</dbReference>
<dbReference type="InterPro" id="IPR013507">
    <property type="entry name" value="DNA_mismatch_S5_2-like"/>
</dbReference>
<dbReference type="InterPro" id="IPR036890">
    <property type="entry name" value="HATPase_C_sf"/>
</dbReference>
<dbReference type="InterPro" id="IPR002099">
    <property type="entry name" value="MutL/Mlh/PMS"/>
</dbReference>
<dbReference type="InterPro" id="IPR038973">
    <property type="entry name" value="MutL/Mlh/Pms-like"/>
</dbReference>
<dbReference type="InterPro" id="IPR014790">
    <property type="entry name" value="MutL_C"/>
</dbReference>
<dbReference type="InterPro" id="IPR042120">
    <property type="entry name" value="MutL_C_dimsub"/>
</dbReference>
<dbReference type="InterPro" id="IPR042121">
    <property type="entry name" value="MutL_C_regsub"/>
</dbReference>
<dbReference type="InterPro" id="IPR037198">
    <property type="entry name" value="MutL_C_sf"/>
</dbReference>
<dbReference type="InterPro" id="IPR020568">
    <property type="entry name" value="Ribosomal_Su5_D2-typ_SF"/>
</dbReference>
<dbReference type="InterPro" id="IPR014721">
    <property type="entry name" value="Ribsml_uS5_D2-typ_fold_subgr"/>
</dbReference>
<dbReference type="NCBIfam" id="TIGR00585">
    <property type="entry name" value="mutl"/>
    <property type="match status" value="1"/>
</dbReference>
<dbReference type="PANTHER" id="PTHR10073">
    <property type="entry name" value="DNA MISMATCH REPAIR PROTEIN MLH, PMS, MUTL"/>
    <property type="match status" value="1"/>
</dbReference>
<dbReference type="PANTHER" id="PTHR10073:SF12">
    <property type="entry name" value="DNA MISMATCH REPAIR PROTEIN MLH1"/>
    <property type="match status" value="1"/>
</dbReference>
<dbReference type="Pfam" id="PF01119">
    <property type="entry name" value="DNA_mis_repair"/>
    <property type="match status" value="1"/>
</dbReference>
<dbReference type="Pfam" id="PF13589">
    <property type="entry name" value="HATPase_c_3"/>
    <property type="match status" value="1"/>
</dbReference>
<dbReference type="Pfam" id="PF08676">
    <property type="entry name" value="MutL_C"/>
    <property type="match status" value="1"/>
</dbReference>
<dbReference type="SMART" id="SM01340">
    <property type="entry name" value="DNA_mis_repair"/>
    <property type="match status" value="1"/>
</dbReference>
<dbReference type="SMART" id="SM00853">
    <property type="entry name" value="MutL_C"/>
    <property type="match status" value="1"/>
</dbReference>
<dbReference type="SUPFAM" id="SSF55874">
    <property type="entry name" value="ATPase domain of HSP90 chaperone/DNA topoisomerase II/histidine kinase"/>
    <property type="match status" value="1"/>
</dbReference>
<dbReference type="SUPFAM" id="SSF118116">
    <property type="entry name" value="DNA mismatch repair protein MutL"/>
    <property type="match status" value="1"/>
</dbReference>
<dbReference type="SUPFAM" id="SSF54211">
    <property type="entry name" value="Ribosomal protein S5 domain 2-like"/>
    <property type="match status" value="1"/>
</dbReference>
<dbReference type="PROSITE" id="PS00058">
    <property type="entry name" value="DNA_MISMATCH_REPAIR_1"/>
    <property type="match status" value="1"/>
</dbReference>
<comment type="function">
    <text evidence="1">This protein is involved in the repair of mismatches in DNA. It is required for dam-dependent methyl-directed DNA mismatch repair. May act as a 'molecular matchmaker', a protein that promotes the formation of a stable complex between two or more DNA-binding proteins in an ATP-dependent manner without itself being part of a final effector complex.</text>
</comment>
<comment type="similarity">
    <text evidence="1">Belongs to the DNA mismatch repair MutL/HexB family.</text>
</comment>
<proteinExistence type="inferred from homology"/>
<organism>
    <name type="scientific">Chlorobium phaeobacteroides (strain DSM 266 / SMG 266 / 2430)</name>
    <dbReference type="NCBI Taxonomy" id="290317"/>
    <lineage>
        <taxon>Bacteria</taxon>
        <taxon>Pseudomonadati</taxon>
        <taxon>Chlorobiota</taxon>
        <taxon>Chlorobiia</taxon>
        <taxon>Chlorobiales</taxon>
        <taxon>Chlorobiaceae</taxon>
        <taxon>Chlorobium/Pelodictyon group</taxon>
        <taxon>Chlorobium</taxon>
    </lineage>
</organism>
<evidence type="ECO:0000255" key="1">
    <source>
        <dbReference type="HAMAP-Rule" id="MF_00149"/>
    </source>
</evidence>
<accession>A1BCW2</accession>
<feature type="chain" id="PRO_1000010002" description="DNA mismatch repair protein MutL">
    <location>
        <begin position="1"/>
        <end position="624"/>
    </location>
</feature>
<name>MUTL_CHLPD</name>
<sequence>MAKIARLPDNVANKISAGEVVQRPASVIKELLENAIDACASKITVTIKDAGKELVQIVDNGIGMSRQDALLSVERFATSKISGVEDLDSLMSLGFRGEALPSIASVSQFELKTKPEGALLGFRFRCDGGEPVEESEVNAEKGTTITVRNLFYNVPARRKFLKSNATEFRHIFESVKSLALAYPEIEWKMVSDDEELFHFRTPDIYERLDAFYGENFSLSLIPVSEENDYLSISGFLGKPGMQKRQKLDQYIYVNRRIIQNRMLSQALQQAYGELLVERQAPFALLFLGIDPSRIDVNVHPAKLEVKFEDERSVRTMFYPVIKRTIQLHDFSPDAAEKEPCSIKEGTLDCSSRKLGFQDIAEPASTTSTLYANYRQGAFGDTPFERPAYAEKEPRPSSINTGFERFEPDLREGGDLFSTTLQARPYEDDNTPDPGENDPKIWQLHNKYIICQIKTGMMIIDQHVAHERVLYERAVDVMNQNVPNSQQLLFPQKIELRAWEYEVFEEIRDDLYRLGFNLRSFGAKTVMIEGIPQDVRPGTEVTILQDMITEFQENSSKLKLERRENLARSYSCRNAIMAGQKLSLEEMRSLIDNLFATRVPYTCPHGRPVIIKLSLDQLDRMFGRK</sequence>
<gene>
    <name evidence="1" type="primary">mutL</name>
    <name type="ordered locus">Cpha266_0172</name>
</gene>
<reference key="1">
    <citation type="submission" date="2006-12" db="EMBL/GenBank/DDBJ databases">
        <title>Complete sequence of Chlorobium phaeobacteroides DSM 266.</title>
        <authorList>
            <consortium name="US DOE Joint Genome Institute"/>
            <person name="Copeland A."/>
            <person name="Lucas S."/>
            <person name="Lapidus A."/>
            <person name="Barry K."/>
            <person name="Detter J.C."/>
            <person name="Glavina del Rio T."/>
            <person name="Hammon N."/>
            <person name="Israni S."/>
            <person name="Pitluck S."/>
            <person name="Goltsman E."/>
            <person name="Schmutz J."/>
            <person name="Larimer F."/>
            <person name="Land M."/>
            <person name="Hauser L."/>
            <person name="Mikhailova N."/>
            <person name="Li T."/>
            <person name="Overmann J."/>
            <person name="Bryant D.A."/>
            <person name="Richardson P."/>
        </authorList>
    </citation>
    <scope>NUCLEOTIDE SEQUENCE [LARGE SCALE GENOMIC DNA]</scope>
    <source>
        <strain>DSM 266 / SMG 266 / 2430</strain>
    </source>
</reference>